<accession>P9WMR6</accession>
<accession>L0T939</accession>
<accession>P64307</accession>
<accession>Q10649</accession>
<feature type="chain" id="PRO_0000427255" description="dITP/XTP pyrophosphatase">
    <location>
        <begin position="1"/>
        <end position="204"/>
    </location>
</feature>
<feature type="active site" description="Proton acceptor" evidence="1">
    <location>
        <position position="76"/>
    </location>
</feature>
<feature type="binding site" evidence="1">
    <location>
        <begin position="11"/>
        <end position="16"/>
    </location>
    <ligand>
        <name>substrate</name>
    </ligand>
</feature>
<feature type="binding site" evidence="1">
    <location>
        <position position="76"/>
    </location>
    <ligand>
        <name>Mg(2+)</name>
        <dbReference type="ChEBI" id="CHEBI:18420"/>
    </ligand>
</feature>
<feature type="binding site" evidence="1">
    <location>
        <position position="77"/>
    </location>
    <ligand>
        <name>substrate</name>
    </ligand>
</feature>
<feature type="binding site" evidence="1">
    <location>
        <begin position="158"/>
        <end position="161"/>
    </location>
    <ligand>
        <name>substrate</name>
    </ligand>
</feature>
<feature type="binding site" evidence="1">
    <location>
        <position position="181"/>
    </location>
    <ligand>
        <name>substrate</name>
    </ligand>
</feature>
<feature type="binding site" evidence="1">
    <location>
        <begin position="186"/>
        <end position="187"/>
    </location>
    <ligand>
        <name>substrate</name>
    </ligand>
</feature>
<reference key="1">
    <citation type="journal article" date="2002" name="J. Bacteriol.">
        <title>Whole-genome comparison of Mycobacterium tuberculosis clinical and laboratory strains.</title>
        <authorList>
            <person name="Fleischmann R.D."/>
            <person name="Alland D."/>
            <person name="Eisen J.A."/>
            <person name="Carpenter L."/>
            <person name="White O."/>
            <person name="Peterson J.D."/>
            <person name="DeBoy R.T."/>
            <person name="Dodson R.J."/>
            <person name="Gwinn M.L."/>
            <person name="Haft D.H."/>
            <person name="Hickey E.K."/>
            <person name="Kolonay J.F."/>
            <person name="Nelson W.C."/>
            <person name="Umayam L.A."/>
            <person name="Ermolaeva M.D."/>
            <person name="Salzberg S.L."/>
            <person name="Delcher A."/>
            <person name="Utterback T.R."/>
            <person name="Weidman J.F."/>
            <person name="Khouri H.M."/>
            <person name="Gill J."/>
            <person name="Mikula A."/>
            <person name="Bishai W."/>
            <person name="Jacobs W.R. Jr."/>
            <person name="Venter J.C."/>
            <person name="Fraser C.M."/>
        </authorList>
    </citation>
    <scope>NUCLEOTIDE SEQUENCE [LARGE SCALE GENOMIC DNA]</scope>
    <source>
        <strain>CDC 1551 / Oshkosh</strain>
    </source>
</reference>
<comment type="function">
    <text evidence="1">Pyrophosphatase that catalyzes the hydrolysis of nucleoside triphosphates to their monophosphate derivatives, with a high preference for the non-canonical purine nucleotides XTP (xanthosine triphosphate), dITP (deoxyinosine triphosphate) and ITP. Seems to function as a house-cleaning enzyme that removes non-canonical purine nucleotides from the nucleotide pool, thus preventing their incorporation into DNA/RNA and avoiding chromosomal lesions.</text>
</comment>
<comment type="catalytic activity">
    <reaction evidence="1">
        <text>XTP + H2O = XMP + diphosphate + H(+)</text>
        <dbReference type="Rhea" id="RHEA:28610"/>
        <dbReference type="ChEBI" id="CHEBI:15377"/>
        <dbReference type="ChEBI" id="CHEBI:15378"/>
        <dbReference type="ChEBI" id="CHEBI:33019"/>
        <dbReference type="ChEBI" id="CHEBI:57464"/>
        <dbReference type="ChEBI" id="CHEBI:61314"/>
        <dbReference type="EC" id="3.6.1.66"/>
    </reaction>
</comment>
<comment type="catalytic activity">
    <reaction evidence="1">
        <text>dITP + H2O = dIMP + diphosphate + H(+)</text>
        <dbReference type="Rhea" id="RHEA:28342"/>
        <dbReference type="ChEBI" id="CHEBI:15377"/>
        <dbReference type="ChEBI" id="CHEBI:15378"/>
        <dbReference type="ChEBI" id="CHEBI:33019"/>
        <dbReference type="ChEBI" id="CHEBI:61194"/>
        <dbReference type="ChEBI" id="CHEBI:61382"/>
        <dbReference type="EC" id="3.6.1.66"/>
    </reaction>
</comment>
<comment type="catalytic activity">
    <reaction evidence="1">
        <text>ITP + H2O = IMP + diphosphate + H(+)</text>
        <dbReference type="Rhea" id="RHEA:29399"/>
        <dbReference type="ChEBI" id="CHEBI:15377"/>
        <dbReference type="ChEBI" id="CHEBI:15378"/>
        <dbReference type="ChEBI" id="CHEBI:33019"/>
        <dbReference type="ChEBI" id="CHEBI:58053"/>
        <dbReference type="ChEBI" id="CHEBI:61402"/>
        <dbReference type="EC" id="3.6.1.66"/>
    </reaction>
</comment>
<comment type="cofactor">
    <cofactor evidence="1">
        <name>Mg(2+)</name>
        <dbReference type="ChEBI" id="CHEBI:18420"/>
    </cofactor>
    <text evidence="1">Binds 1 Mg(2+) ion per subunit.</text>
</comment>
<comment type="subunit">
    <text evidence="1">Homodimer.</text>
</comment>
<comment type="similarity">
    <text evidence="1">Belongs to the HAM1 NTPase family.</text>
</comment>
<protein>
    <recommendedName>
        <fullName evidence="1">dITP/XTP pyrophosphatase</fullName>
        <ecNumber evidence="1">3.6.1.66</ecNumber>
    </recommendedName>
    <alternativeName>
        <fullName evidence="1">Non-canonical purine NTP pyrophosphatase</fullName>
    </alternativeName>
    <alternativeName>
        <fullName evidence="1">Non-standard purine NTP pyrophosphatase</fullName>
    </alternativeName>
    <alternativeName>
        <fullName evidence="1">Nucleoside-triphosphate diphosphatase</fullName>
    </alternativeName>
    <alternativeName>
        <fullName evidence="1">Nucleoside-triphosphate pyrophosphatase</fullName>
        <shortName evidence="1">NTPase</shortName>
    </alternativeName>
</protein>
<evidence type="ECO:0000255" key="1">
    <source>
        <dbReference type="HAMAP-Rule" id="MF_01405"/>
    </source>
</evidence>
<sequence>MALVTKLLVASRNRKKLAELRRVLDGAGLSGLTLLSLGDVSPLPETPETGVTFEDNALAKARDAFSATGLASVADDSGLEVAALGGMPGVLSARWSGRYGDDAANTALLLAQLCDVPDERRGAAFVSACALVSGSGEVVVRGEWPGTIAREPRGDGGFGYDPVFVPYGDDRTAAQLSPAEKDAVSHRGRALALLLPALRSLATG</sequence>
<organism>
    <name type="scientific">Mycobacterium tuberculosis (strain CDC 1551 / Oshkosh)</name>
    <dbReference type="NCBI Taxonomy" id="83331"/>
    <lineage>
        <taxon>Bacteria</taxon>
        <taxon>Bacillati</taxon>
        <taxon>Actinomycetota</taxon>
        <taxon>Actinomycetes</taxon>
        <taxon>Mycobacteriales</taxon>
        <taxon>Mycobacteriaceae</taxon>
        <taxon>Mycobacterium</taxon>
        <taxon>Mycobacterium tuberculosis complex</taxon>
    </lineage>
</organism>
<keyword id="KW-0378">Hydrolase</keyword>
<keyword id="KW-0460">Magnesium</keyword>
<keyword id="KW-0479">Metal-binding</keyword>
<keyword id="KW-0546">Nucleotide metabolism</keyword>
<keyword id="KW-0547">Nucleotide-binding</keyword>
<keyword id="KW-1185">Reference proteome</keyword>
<gene>
    <name type="ordered locus">MT1382</name>
</gene>
<name>IXTPA_MYCTO</name>
<proteinExistence type="inferred from homology"/>
<dbReference type="EC" id="3.6.1.66" evidence="1"/>
<dbReference type="EMBL" id="AE000516">
    <property type="protein sequence ID" value="AAK45647.1"/>
    <property type="molecule type" value="Genomic_DNA"/>
</dbReference>
<dbReference type="PIR" id="D70739">
    <property type="entry name" value="D70739"/>
</dbReference>
<dbReference type="SMR" id="P9WMR6"/>
<dbReference type="KEGG" id="mtc:MT1382"/>
<dbReference type="PATRIC" id="fig|83331.31.peg.1490"/>
<dbReference type="HOGENOM" id="CLU_082080_0_1_11"/>
<dbReference type="Proteomes" id="UP000001020">
    <property type="component" value="Chromosome"/>
</dbReference>
<dbReference type="GO" id="GO:0005829">
    <property type="term" value="C:cytosol"/>
    <property type="evidence" value="ECO:0007669"/>
    <property type="project" value="TreeGrafter"/>
</dbReference>
<dbReference type="GO" id="GO:0035870">
    <property type="term" value="F:dITP diphosphatase activity"/>
    <property type="evidence" value="ECO:0007669"/>
    <property type="project" value="RHEA"/>
</dbReference>
<dbReference type="GO" id="GO:0036220">
    <property type="term" value="F:ITP diphosphatase activity"/>
    <property type="evidence" value="ECO:0007669"/>
    <property type="project" value="UniProtKB-EC"/>
</dbReference>
<dbReference type="GO" id="GO:0046872">
    <property type="term" value="F:metal ion binding"/>
    <property type="evidence" value="ECO:0007669"/>
    <property type="project" value="UniProtKB-KW"/>
</dbReference>
<dbReference type="GO" id="GO:0000166">
    <property type="term" value="F:nucleotide binding"/>
    <property type="evidence" value="ECO:0007669"/>
    <property type="project" value="UniProtKB-KW"/>
</dbReference>
<dbReference type="GO" id="GO:0017111">
    <property type="term" value="F:ribonucleoside triphosphate phosphatase activity"/>
    <property type="evidence" value="ECO:0007669"/>
    <property type="project" value="InterPro"/>
</dbReference>
<dbReference type="GO" id="GO:0036222">
    <property type="term" value="F:XTP diphosphatase activity"/>
    <property type="evidence" value="ECO:0007669"/>
    <property type="project" value="RHEA"/>
</dbReference>
<dbReference type="GO" id="GO:0009117">
    <property type="term" value="P:nucleotide metabolic process"/>
    <property type="evidence" value="ECO:0007669"/>
    <property type="project" value="UniProtKB-KW"/>
</dbReference>
<dbReference type="GO" id="GO:0009146">
    <property type="term" value="P:purine nucleoside triphosphate catabolic process"/>
    <property type="evidence" value="ECO:0007669"/>
    <property type="project" value="UniProtKB-UniRule"/>
</dbReference>
<dbReference type="CDD" id="cd00515">
    <property type="entry name" value="HAM1"/>
    <property type="match status" value="1"/>
</dbReference>
<dbReference type="FunFam" id="3.90.950.10:FF:000001">
    <property type="entry name" value="dITP/XTP pyrophosphatase"/>
    <property type="match status" value="1"/>
</dbReference>
<dbReference type="Gene3D" id="3.90.950.10">
    <property type="match status" value="1"/>
</dbReference>
<dbReference type="HAMAP" id="MF_01405">
    <property type="entry name" value="Non_canon_purine_NTPase"/>
    <property type="match status" value="1"/>
</dbReference>
<dbReference type="InterPro" id="IPR020922">
    <property type="entry name" value="dITP/XTP_pyrophosphatase"/>
</dbReference>
<dbReference type="InterPro" id="IPR029001">
    <property type="entry name" value="ITPase-like_fam"/>
</dbReference>
<dbReference type="InterPro" id="IPR002637">
    <property type="entry name" value="RdgB/HAM1"/>
</dbReference>
<dbReference type="NCBIfam" id="TIGR00042">
    <property type="entry name" value="RdgB/HAM1 family non-canonical purine NTP pyrophosphatase"/>
    <property type="match status" value="1"/>
</dbReference>
<dbReference type="PANTHER" id="PTHR11067:SF9">
    <property type="entry name" value="INOSINE TRIPHOSPHATE PYROPHOSPHATASE"/>
    <property type="match status" value="1"/>
</dbReference>
<dbReference type="PANTHER" id="PTHR11067">
    <property type="entry name" value="INOSINE TRIPHOSPHATE PYROPHOSPHATASE/HAM1 PROTEIN"/>
    <property type="match status" value="1"/>
</dbReference>
<dbReference type="Pfam" id="PF01725">
    <property type="entry name" value="Ham1p_like"/>
    <property type="match status" value="1"/>
</dbReference>
<dbReference type="SUPFAM" id="SSF52972">
    <property type="entry name" value="ITPase-like"/>
    <property type="match status" value="1"/>
</dbReference>